<dbReference type="EMBL" id="CP001175">
    <property type="protein sequence ID" value="ACK39644.1"/>
    <property type="molecule type" value="Genomic_DNA"/>
</dbReference>
<dbReference type="RefSeq" id="WP_012581411.1">
    <property type="nucleotide sequence ID" value="NC_011660.1"/>
</dbReference>
<dbReference type="SMR" id="B8DG54"/>
<dbReference type="KEGG" id="lmh:LMHCC_1299"/>
<dbReference type="HOGENOM" id="CLU_027562_9_0_9"/>
<dbReference type="GO" id="GO:0005737">
    <property type="term" value="C:cytoplasm"/>
    <property type="evidence" value="ECO:0007669"/>
    <property type="project" value="UniProtKB-SubCell"/>
</dbReference>
<dbReference type="GO" id="GO:0003677">
    <property type="term" value="F:DNA binding"/>
    <property type="evidence" value="ECO:0007669"/>
    <property type="project" value="UniProtKB-KW"/>
</dbReference>
<dbReference type="GO" id="GO:0009037">
    <property type="term" value="F:tyrosine-based site-specific recombinase activity"/>
    <property type="evidence" value="ECO:0007669"/>
    <property type="project" value="UniProtKB-UniRule"/>
</dbReference>
<dbReference type="GO" id="GO:0051301">
    <property type="term" value="P:cell division"/>
    <property type="evidence" value="ECO:0007669"/>
    <property type="project" value="UniProtKB-KW"/>
</dbReference>
<dbReference type="GO" id="GO:0007059">
    <property type="term" value="P:chromosome segregation"/>
    <property type="evidence" value="ECO:0007669"/>
    <property type="project" value="UniProtKB-UniRule"/>
</dbReference>
<dbReference type="GO" id="GO:0006313">
    <property type="term" value="P:DNA transposition"/>
    <property type="evidence" value="ECO:0007669"/>
    <property type="project" value="UniProtKB-UniRule"/>
</dbReference>
<dbReference type="CDD" id="cd00798">
    <property type="entry name" value="INT_XerDC_C"/>
    <property type="match status" value="1"/>
</dbReference>
<dbReference type="Gene3D" id="1.10.150.130">
    <property type="match status" value="1"/>
</dbReference>
<dbReference type="Gene3D" id="1.10.443.10">
    <property type="entry name" value="Intergrase catalytic core"/>
    <property type="match status" value="1"/>
</dbReference>
<dbReference type="HAMAP" id="MF_01808">
    <property type="entry name" value="Recomb_XerC_XerD"/>
    <property type="match status" value="1"/>
</dbReference>
<dbReference type="InterPro" id="IPR044068">
    <property type="entry name" value="CB"/>
</dbReference>
<dbReference type="InterPro" id="IPR011010">
    <property type="entry name" value="DNA_brk_join_enz"/>
</dbReference>
<dbReference type="InterPro" id="IPR013762">
    <property type="entry name" value="Integrase-like_cat_sf"/>
</dbReference>
<dbReference type="InterPro" id="IPR002104">
    <property type="entry name" value="Integrase_catalytic"/>
</dbReference>
<dbReference type="InterPro" id="IPR010998">
    <property type="entry name" value="Integrase_recombinase_N"/>
</dbReference>
<dbReference type="InterPro" id="IPR004107">
    <property type="entry name" value="Integrase_SAM-like_N"/>
</dbReference>
<dbReference type="InterPro" id="IPR011931">
    <property type="entry name" value="Recomb_XerC"/>
</dbReference>
<dbReference type="InterPro" id="IPR023009">
    <property type="entry name" value="Tyrosine_recombinase_XerC/XerD"/>
</dbReference>
<dbReference type="InterPro" id="IPR050090">
    <property type="entry name" value="Tyrosine_recombinase_XerCD"/>
</dbReference>
<dbReference type="NCBIfam" id="NF001399">
    <property type="entry name" value="PRK00283.1"/>
    <property type="match status" value="1"/>
</dbReference>
<dbReference type="NCBIfam" id="TIGR02224">
    <property type="entry name" value="recomb_XerC"/>
    <property type="match status" value="1"/>
</dbReference>
<dbReference type="PANTHER" id="PTHR30349">
    <property type="entry name" value="PHAGE INTEGRASE-RELATED"/>
    <property type="match status" value="1"/>
</dbReference>
<dbReference type="PANTHER" id="PTHR30349:SF77">
    <property type="entry name" value="TYROSINE RECOMBINASE XERC"/>
    <property type="match status" value="1"/>
</dbReference>
<dbReference type="Pfam" id="PF02899">
    <property type="entry name" value="Phage_int_SAM_1"/>
    <property type="match status" value="1"/>
</dbReference>
<dbReference type="Pfam" id="PF00589">
    <property type="entry name" value="Phage_integrase"/>
    <property type="match status" value="1"/>
</dbReference>
<dbReference type="SUPFAM" id="SSF56349">
    <property type="entry name" value="DNA breaking-rejoining enzymes"/>
    <property type="match status" value="1"/>
</dbReference>
<dbReference type="PROSITE" id="PS51900">
    <property type="entry name" value="CB"/>
    <property type="match status" value="1"/>
</dbReference>
<dbReference type="PROSITE" id="PS51898">
    <property type="entry name" value="TYR_RECOMBINASE"/>
    <property type="match status" value="1"/>
</dbReference>
<proteinExistence type="inferred from homology"/>
<comment type="function">
    <text evidence="1">Site-specific tyrosine recombinase, which acts by catalyzing the cutting and rejoining of the recombining DNA molecules. The XerC-XerD complex is essential to convert dimers of the bacterial chromosome into monomers to permit their segregation at cell division. It also contributes to the segregational stability of plasmids.</text>
</comment>
<comment type="subunit">
    <text evidence="1">Forms a cyclic heterotetrameric complex composed of two molecules of XerC and two molecules of XerD.</text>
</comment>
<comment type="subcellular location">
    <subcellularLocation>
        <location evidence="1">Cytoplasm</location>
    </subcellularLocation>
</comment>
<comment type="similarity">
    <text evidence="1">Belongs to the 'phage' integrase family. XerC subfamily.</text>
</comment>
<accession>B8DG54</accession>
<evidence type="ECO:0000255" key="1">
    <source>
        <dbReference type="HAMAP-Rule" id="MF_01808"/>
    </source>
</evidence>
<evidence type="ECO:0000255" key="2">
    <source>
        <dbReference type="PROSITE-ProRule" id="PRU01246"/>
    </source>
</evidence>
<evidence type="ECO:0000255" key="3">
    <source>
        <dbReference type="PROSITE-ProRule" id="PRU01248"/>
    </source>
</evidence>
<organism>
    <name type="scientific">Listeria monocytogenes serotype 4a (strain HCC23)</name>
    <dbReference type="NCBI Taxonomy" id="552536"/>
    <lineage>
        <taxon>Bacteria</taxon>
        <taxon>Bacillati</taxon>
        <taxon>Bacillota</taxon>
        <taxon>Bacilli</taxon>
        <taxon>Bacillales</taxon>
        <taxon>Listeriaceae</taxon>
        <taxon>Listeria</taxon>
    </lineage>
</organism>
<sequence>MTQEGKLEQQFLDYLHSERNYSVNTSTAYENDLLDFRRFLNEQAIETYQQVTFLDVRIYLTELKQKSFSRTTVARKISSLRSFYTFLLRENVIAENPFTYVSHAKNQLRLPKFFYSEEMEALFQVVYEDNETLTLRDRVLLEVLYGTGIRVSECAGILLPDLDTSYQAILIRGKGNKERYVPFGVYAEDAITDYLPKRTELMTRYKKSHDALLVNHYGDPLTTRGIRYCLTKIISKASLTRKIHPHMLRHTFATDLLNNGADMRTVQELLGHASLASTQIYTHVTKEHLKSTYMKHHPRA</sequence>
<keyword id="KW-0131">Cell cycle</keyword>
<keyword id="KW-0132">Cell division</keyword>
<keyword id="KW-0159">Chromosome partition</keyword>
<keyword id="KW-0963">Cytoplasm</keyword>
<keyword id="KW-0229">DNA integration</keyword>
<keyword id="KW-0233">DNA recombination</keyword>
<keyword id="KW-0238">DNA-binding</keyword>
<feature type="chain" id="PRO_1000187602" description="Tyrosine recombinase XerC">
    <location>
        <begin position="1"/>
        <end position="300"/>
    </location>
</feature>
<feature type="domain" description="Core-binding (CB)" evidence="3">
    <location>
        <begin position="2"/>
        <end position="88"/>
    </location>
</feature>
<feature type="domain" description="Tyr recombinase" evidence="2">
    <location>
        <begin position="109"/>
        <end position="294"/>
    </location>
</feature>
<feature type="active site" evidence="1">
    <location>
        <position position="150"/>
    </location>
</feature>
<feature type="active site" evidence="1">
    <location>
        <position position="174"/>
    </location>
</feature>
<feature type="active site" evidence="1">
    <location>
        <position position="246"/>
    </location>
</feature>
<feature type="active site" evidence="1">
    <location>
        <position position="249"/>
    </location>
</feature>
<feature type="active site" evidence="1">
    <location>
        <position position="272"/>
    </location>
</feature>
<feature type="active site" description="O-(3'-phospho-DNA)-tyrosine intermediate" evidence="1">
    <location>
        <position position="281"/>
    </location>
</feature>
<protein>
    <recommendedName>
        <fullName evidence="1">Tyrosine recombinase XerC</fullName>
    </recommendedName>
</protein>
<name>XERC_LISMH</name>
<gene>
    <name evidence="1" type="primary">xerC</name>
    <name type="ordered locus">LMHCC_1299</name>
</gene>
<reference key="1">
    <citation type="journal article" date="2011" name="J. Bacteriol.">
        <title>Genome sequence of lineage III Listeria monocytogenes strain HCC23.</title>
        <authorList>
            <person name="Steele C.L."/>
            <person name="Donaldson J.R."/>
            <person name="Paul D."/>
            <person name="Banes M.M."/>
            <person name="Arick T."/>
            <person name="Bridges S.M."/>
            <person name="Lawrence M.L."/>
        </authorList>
    </citation>
    <scope>NUCLEOTIDE SEQUENCE [LARGE SCALE GENOMIC DNA]</scope>
    <source>
        <strain>HCC23</strain>
    </source>
</reference>